<gene>
    <name evidence="1" type="primary">nuoK</name>
    <name type="ordered locus">Strop_4055</name>
</gene>
<dbReference type="EC" id="7.1.1.-" evidence="1"/>
<dbReference type="EMBL" id="CP000667">
    <property type="protein sequence ID" value="ABP56485.1"/>
    <property type="molecule type" value="Genomic_DNA"/>
</dbReference>
<dbReference type="RefSeq" id="WP_012015253.1">
    <property type="nucleotide sequence ID" value="NC_009380.1"/>
</dbReference>
<dbReference type="SMR" id="A4XC28"/>
<dbReference type="STRING" id="369723.Strop_4055"/>
<dbReference type="KEGG" id="stp:Strop_4055"/>
<dbReference type="PATRIC" id="fig|369723.5.peg.4193"/>
<dbReference type="eggNOG" id="COG0713">
    <property type="taxonomic scope" value="Bacteria"/>
</dbReference>
<dbReference type="HOGENOM" id="CLU_144724_0_0_11"/>
<dbReference type="Proteomes" id="UP000000235">
    <property type="component" value="Chromosome"/>
</dbReference>
<dbReference type="GO" id="GO:0030964">
    <property type="term" value="C:NADH dehydrogenase complex"/>
    <property type="evidence" value="ECO:0007669"/>
    <property type="project" value="TreeGrafter"/>
</dbReference>
<dbReference type="GO" id="GO:0005886">
    <property type="term" value="C:plasma membrane"/>
    <property type="evidence" value="ECO:0007669"/>
    <property type="project" value="UniProtKB-SubCell"/>
</dbReference>
<dbReference type="GO" id="GO:0050136">
    <property type="term" value="F:NADH:ubiquinone reductase (non-electrogenic) activity"/>
    <property type="evidence" value="ECO:0007669"/>
    <property type="project" value="UniProtKB-UniRule"/>
</dbReference>
<dbReference type="GO" id="GO:0048038">
    <property type="term" value="F:quinone binding"/>
    <property type="evidence" value="ECO:0007669"/>
    <property type="project" value="UniProtKB-KW"/>
</dbReference>
<dbReference type="GO" id="GO:0042773">
    <property type="term" value="P:ATP synthesis coupled electron transport"/>
    <property type="evidence" value="ECO:0007669"/>
    <property type="project" value="InterPro"/>
</dbReference>
<dbReference type="FunFam" id="1.10.287.3510:FF:000001">
    <property type="entry name" value="NADH-quinone oxidoreductase subunit K"/>
    <property type="match status" value="1"/>
</dbReference>
<dbReference type="Gene3D" id="1.10.287.3510">
    <property type="match status" value="1"/>
</dbReference>
<dbReference type="HAMAP" id="MF_01456">
    <property type="entry name" value="NDH1_NuoK"/>
    <property type="match status" value="1"/>
</dbReference>
<dbReference type="InterPro" id="IPR001133">
    <property type="entry name" value="NADH_UbQ_OxRdtase_chain4L/K"/>
</dbReference>
<dbReference type="InterPro" id="IPR039428">
    <property type="entry name" value="NUOK/Mnh_C1-like"/>
</dbReference>
<dbReference type="NCBIfam" id="NF004320">
    <property type="entry name" value="PRK05715.1-2"/>
    <property type="match status" value="1"/>
</dbReference>
<dbReference type="NCBIfam" id="NF004321">
    <property type="entry name" value="PRK05715.1-3"/>
    <property type="match status" value="1"/>
</dbReference>
<dbReference type="NCBIfam" id="NF004323">
    <property type="entry name" value="PRK05715.1-5"/>
    <property type="match status" value="1"/>
</dbReference>
<dbReference type="PANTHER" id="PTHR11434:SF21">
    <property type="entry name" value="NADH DEHYDROGENASE SUBUNIT 4L-RELATED"/>
    <property type="match status" value="1"/>
</dbReference>
<dbReference type="PANTHER" id="PTHR11434">
    <property type="entry name" value="NADH-UBIQUINONE OXIDOREDUCTASE SUBUNIT ND4L"/>
    <property type="match status" value="1"/>
</dbReference>
<dbReference type="Pfam" id="PF00420">
    <property type="entry name" value="Oxidored_q2"/>
    <property type="match status" value="1"/>
</dbReference>
<feature type="chain" id="PRO_0000390218" description="NADH-quinone oxidoreductase subunit K">
    <location>
        <begin position="1"/>
        <end position="105"/>
    </location>
</feature>
<feature type="transmembrane region" description="Helical" evidence="1">
    <location>
        <begin position="9"/>
        <end position="29"/>
    </location>
</feature>
<feature type="transmembrane region" description="Helical" evidence="1">
    <location>
        <begin position="34"/>
        <end position="54"/>
    </location>
</feature>
<feature type="transmembrane region" description="Helical" evidence="1">
    <location>
        <begin position="65"/>
        <end position="85"/>
    </location>
</feature>
<protein>
    <recommendedName>
        <fullName evidence="1">NADH-quinone oxidoreductase subunit K</fullName>
        <ecNumber evidence="1">7.1.1.-</ecNumber>
    </recommendedName>
    <alternativeName>
        <fullName evidence="1">NADH dehydrogenase I subunit K</fullName>
    </alternativeName>
    <alternativeName>
        <fullName evidence="1">NDH-1 subunit K</fullName>
    </alternativeName>
</protein>
<proteinExistence type="inferred from homology"/>
<comment type="function">
    <text evidence="1">NDH-1 shuttles electrons from NADH, via FMN and iron-sulfur (Fe-S) centers, to quinones in the respiratory chain. The immediate electron acceptor for the enzyme in this species is believed to be a menaquinone. Couples the redox reaction to proton translocation (for every two electrons transferred, four hydrogen ions are translocated across the cytoplasmic membrane), and thus conserves the redox energy in a proton gradient.</text>
</comment>
<comment type="catalytic activity">
    <reaction evidence="1">
        <text>a quinone + NADH + 5 H(+)(in) = a quinol + NAD(+) + 4 H(+)(out)</text>
        <dbReference type="Rhea" id="RHEA:57888"/>
        <dbReference type="ChEBI" id="CHEBI:15378"/>
        <dbReference type="ChEBI" id="CHEBI:24646"/>
        <dbReference type="ChEBI" id="CHEBI:57540"/>
        <dbReference type="ChEBI" id="CHEBI:57945"/>
        <dbReference type="ChEBI" id="CHEBI:132124"/>
    </reaction>
</comment>
<comment type="subunit">
    <text evidence="1">NDH-1 is composed of 14 different subunits. Subunits NuoA, H, J, K, L, M, N constitute the membrane sector of the complex.</text>
</comment>
<comment type="subcellular location">
    <subcellularLocation>
        <location evidence="1">Cell membrane</location>
        <topology evidence="1">Multi-pass membrane protein</topology>
    </subcellularLocation>
</comment>
<comment type="similarity">
    <text evidence="1">Belongs to the complex I subunit 4L family.</text>
</comment>
<organism>
    <name type="scientific">Salinispora tropica (strain ATCC BAA-916 / DSM 44818 / JCM 13857 / NBRC 105044 / CNB-440)</name>
    <dbReference type="NCBI Taxonomy" id="369723"/>
    <lineage>
        <taxon>Bacteria</taxon>
        <taxon>Bacillati</taxon>
        <taxon>Actinomycetota</taxon>
        <taxon>Actinomycetes</taxon>
        <taxon>Micromonosporales</taxon>
        <taxon>Micromonosporaceae</taxon>
        <taxon>Salinispora</taxon>
    </lineage>
</organism>
<evidence type="ECO:0000255" key="1">
    <source>
        <dbReference type="HAMAP-Rule" id="MF_01456"/>
    </source>
</evidence>
<accession>A4XC28</accession>
<sequence length="105" mass="11511">MNEFFSVEPNYYLVLAAVLFTIGAAGVLVRRNAIVLFMCVELMLNAANLTLVTFSRINGDLNGQIMAFFVMVVAAAEVVVGLAIIMAIYRTRRSASVDDANLLKY</sequence>
<reference key="1">
    <citation type="journal article" date="2007" name="Proc. Natl. Acad. Sci. U.S.A.">
        <title>Genome sequencing reveals complex secondary metabolome in the marine actinomycete Salinispora tropica.</title>
        <authorList>
            <person name="Udwary D.W."/>
            <person name="Zeigler L."/>
            <person name="Asolkar R.N."/>
            <person name="Singan V."/>
            <person name="Lapidus A."/>
            <person name="Fenical W."/>
            <person name="Jensen P.R."/>
            <person name="Moore B.S."/>
        </authorList>
    </citation>
    <scope>NUCLEOTIDE SEQUENCE [LARGE SCALE GENOMIC DNA]</scope>
    <source>
        <strain>ATCC BAA-916 / DSM 44818 / JCM 13857 / NBRC 105044 / CNB-440</strain>
    </source>
</reference>
<keyword id="KW-1003">Cell membrane</keyword>
<keyword id="KW-0472">Membrane</keyword>
<keyword id="KW-0520">NAD</keyword>
<keyword id="KW-0874">Quinone</keyword>
<keyword id="KW-1185">Reference proteome</keyword>
<keyword id="KW-1278">Translocase</keyword>
<keyword id="KW-0812">Transmembrane</keyword>
<keyword id="KW-1133">Transmembrane helix</keyword>
<keyword id="KW-0813">Transport</keyword>
<name>NUOK_SALTO</name>